<keyword id="KW-1185">Reference proteome</keyword>
<keyword id="KW-1277">Toxin-antitoxin system</keyword>
<feature type="chain" id="PRO_0000386421" description="Small toxic protein IbsB">
    <location>
        <begin position="1"/>
        <end position="18"/>
    </location>
</feature>
<accession>C1P608</accession>
<protein>
    <recommendedName>
        <fullName>Small toxic protein IbsB</fullName>
    </recommendedName>
</protein>
<gene>
    <name type="primary">ibsB</name>
    <name type="ordered locus">b4668</name>
    <name type="ordered locus">JW2058.2</name>
</gene>
<reference key="1">
    <citation type="journal article" date="1997" name="Science">
        <title>The complete genome sequence of Escherichia coli K-12.</title>
        <authorList>
            <person name="Blattner F.R."/>
            <person name="Plunkett G. III"/>
            <person name="Bloch C.A."/>
            <person name="Perna N.T."/>
            <person name="Burland V."/>
            <person name="Riley M."/>
            <person name="Collado-Vides J."/>
            <person name="Glasner J.D."/>
            <person name="Rode C.K."/>
            <person name="Mayhew G.F."/>
            <person name="Gregor J."/>
            <person name="Davis N.W."/>
            <person name="Kirkpatrick H.A."/>
            <person name="Goeden M.A."/>
            <person name="Rose D.J."/>
            <person name="Mau B."/>
            <person name="Shao Y."/>
        </authorList>
    </citation>
    <scope>NUCLEOTIDE SEQUENCE [LARGE SCALE GENOMIC DNA]</scope>
    <source>
        <strain>K12 / MG1655 / ATCC 47076</strain>
    </source>
</reference>
<reference key="2">
    <citation type="journal article" date="2006" name="Mol. Syst. Biol.">
        <title>Highly accurate genome sequences of Escherichia coli K-12 strains MG1655 and W3110.</title>
        <authorList>
            <person name="Hayashi K."/>
            <person name="Morooka N."/>
            <person name="Yamamoto Y."/>
            <person name="Fujita K."/>
            <person name="Isono K."/>
            <person name="Choi S."/>
            <person name="Ohtsubo E."/>
            <person name="Baba T."/>
            <person name="Wanner B.L."/>
            <person name="Mori H."/>
            <person name="Horiuchi T."/>
        </authorList>
    </citation>
    <scope>NUCLEOTIDE SEQUENCE [LARGE SCALE GENOMIC DNA]</scope>
    <source>
        <strain>K12 / W3110 / ATCC 27325 / DSM 5911</strain>
    </source>
</reference>
<reference key="3">
    <citation type="journal article" date="2008" name="Mol. Microbiol.">
        <title>Repression of small toxic protein synthesis by the Sib and OhsC small RNAs.</title>
        <authorList>
            <person name="Fozo E.M."/>
            <person name="Kawano M."/>
            <person name="Fontaine F."/>
            <person name="Kaya Y."/>
            <person name="Mendieta K.S."/>
            <person name="Jones K.L."/>
            <person name="Ocampo A."/>
            <person name="Rudd K.E."/>
            <person name="Storz G."/>
        </authorList>
    </citation>
    <scope>IDENTIFICATION</scope>
    <scope>DISRUPTION PHENOTYPE</scope>
    <source>
        <strain>K12 / MG1655 / ATCC 47076</strain>
    </source>
</reference>
<evidence type="ECO:0000269" key="1">
    <source>
    </source>
</evidence>
<evidence type="ECO:0000305" key="2"/>
<name>IBSB_ECOLI</name>
<dbReference type="EMBL" id="U00096">
    <property type="protein sequence ID" value="ACO60000.1"/>
    <property type="molecule type" value="Genomic_DNA"/>
</dbReference>
<dbReference type="EMBL" id="AP009048">
    <property type="status" value="NOT_ANNOTATED_CDS"/>
    <property type="molecule type" value="Genomic_DNA"/>
</dbReference>
<dbReference type="RefSeq" id="WP_001386899.1">
    <property type="nucleotide sequence ID" value="NZ_STEB01000002.1"/>
</dbReference>
<dbReference type="RefSeq" id="YP_002791248.1">
    <property type="nucleotide sequence ID" value="NC_000913.3"/>
</dbReference>
<dbReference type="EnsemblBacteria" id="ACO60000">
    <property type="protein sequence ID" value="ACO60000"/>
    <property type="gene ID" value="b4668"/>
</dbReference>
<dbReference type="GeneID" id="7751626"/>
<dbReference type="KEGG" id="eco:b4668"/>
<dbReference type="InParanoid" id="C1P608"/>
<dbReference type="BioCyc" id="EcoCyc:MONOMER0-2858"/>
<dbReference type="PRO" id="PR:C1P608"/>
<dbReference type="Proteomes" id="UP000000625">
    <property type="component" value="Chromosome"/>
</dbReference>
<dbReference type="InterPro" id="IPR025881">
    <property type="entry name" value="Toxin_Ibs"/>
</dbReference>
<dbReference type="Pfam" id="PF13956">
    <property type="entry name" value="Ibs_toxin"/>
    <property type="match status" value="1"/>
</dbReference>
<proteinExistence type="inferred from homology"/>
<sequence>MMKLLIIVVLLVISFPAY</sequence>
<comment type="function">
    <text>Toxic component of a type I toxin-antitoxin (TA) system.</text>
</comment>
<comment type="induction">
    <text evidence="2">The sibB sRNA probably represses expression of ibsB mRNA, either by destabilizing the transcript and/or preventing its translation (Probable). Expression of the proteinaceous toxin is controlled by antisense sRNA SibB.</text>
</comment>
<comment type="disruption phenotype">
    <text evidence="1">None seen. An isbB overproducing strain cannot be made in the absence of the sibB gene.</text>
</comment>
<comment type="miscellaneous">
    <text>Part of the SIBb repeat region (formerly known as QUAD1b), encoded on the opposite strand from the sibB (formerly knowny as ryeD) RNA.</text>
</comment>
<comment type="similarity">
    <text evidence="2">Belongs to the Ibs toxic protein family.</text>
</comment>
<organism>
    <name type="scientific">Escherichia coli (strain K12)</name>
    <dbReference type="NCBI Taxonomy" id="83333"/>
    <lineage>
        <taxon>Bacteria</taxon>
        <taxon>Pseudomonadati</taxon>
        <taxon>Pseudomonadota</taxon>
        <taxon>Gammaproteobacteria</taxon>
        <taxon>Enterobacterales</taxon>
        <taxon>Enterobacteriaceae</taxon>
        <taxon>Escherichia</taxon>
    </lineage>
</organism>